<accession>P13539</accession>
<accession>Q60562</accession>
<feature type="chain" id="PRO_0000123402" description="Myosin-6">
    <location>
        <begin position="1"/>
        <end position="1939"/>
    </location>
</feature>
<feature type="domain" description="Myosin N-terminal SH3-like" evidence="6">
    <location>
        <begin position="32"/>
        <end position="81"/>
    </location>
</feature>
<feature type="domain" description="Myosin motor" evidence="5">
    <location>
        <begin position="85"/>
        <end position="780"/>
    </location>
</feature>
<feature type="domain" description="IQ" evidence="4">
    <location>
        <begin position="783"/>
        <end position="812"/>
    </location>
</feature>
<feature type="region of interest" description="Actin-binding">
    <location>
        <begin position="657"/>
        <end position="679"/>
    </location>
</feature>
<feature type="region of interest" description="Actin-binding">
    <location>
        <begin position="759"/>
        <end position="773"/>
    </location>
</feature>
<feature type="region of interest" description="Disordered" evidence="7">
    <location>
        <begin position="1908"/>
        <end position="1939"/>
    </location>
</feature>
<feature type="coiled-coil region" evidence="3">
    <location>
        <begin position="842"/>
        <end position="1939"/>
    </location>
</feature>
<feature type="compositionally biased region" description="Basic and acidic residues" evidence="7">
    <location>
        <begin position="1925"/>
        <end position="1939"/>
    </location>
</feature>
<feature type="binding site" evidence="3">
    <location>
        <begin position="178"/>
        <end position="185"/>
    </location>
    <ligand>
        <name>ATP</name>
        <dbReference type="ChEBI" id="CHEBI:30616"/>
    </ligand>
</feature>
<feature type="modified residue" description="N6,N6,N6-trimethyllysine" evidence="3">
    <location>
        <position position="129"/>
    </location>
</feature>
<feature type="modified residue" description="Phosphothreonine" evidence="1">
    <location>
        <position position="379"/>
    </location>
</feature>
<feature type="modified residue" description="Phosphoserine" evidence="1">
    <location>
        <position position="417"/>
    </location>
</feature>
<feature type="modified residue" description="Phosphoserine" evidence="1">
    <location>
        <position position="1090"/>
    </location>
</feature>
<feature type="modified residue" description="Phosphoserine" evidence="1">
    <location>
        <position position="1139"/>
    </location>
</feature>
<feature type="modified residue" description="Phosphotyrosine" evidence="1">
    <location>
        <position position="1261"/>
    </location>
</feature>
<feature type="modified residue" description="Phosphoserine" evidence="2">
    <location>
        <position position="1271"/>
    </location>
</feature>
<feature type="modified residue" description="Phosphothreonine" evidence="1">
    <location>
        <position position="1277"/>
    </location>
</feature>
<feature type="modified residue" description="Phosphothreonine" evidence="1">
    <location>
        <position position="1284"/>
    </location>
</feature>
<feature type="modified residue" description="Phosphoserine" evidence="1">
    <location>
        <position position="1309"/>
    </location>
</feature>
<feature type="modified residue" description="Phosphotyrosine" evidence="1">
    <location>
        <position position="1310"/>
    </location>
</feature>
<feature type="modified residue" description="Phosphothreonine" evidence="1">
    <location>
        <position position="1311"/>
    </location>
</feature>
<feature type="modified residue" description="Phosphoserine" evidence="2">
    <location>
        <position position="1512"/>
    </location>
</feature>
<feature type="modified residue" description="Phosphothreonine" evidence="1">
    <location>
        <position position="1515"/>
    </location>
</feature>
<feature type="modified residue" description="Phosphothreonine" evidence="1">
    <location>
        <position position="1681"/>
    </location>
</feature>
<feature type="sequence conflict" description="In Ref. 2; AAA37081." evidence="8" ref="2">
    <original>Q</original>
    <variation>L</variation>
    <location>
        <position position="1633"/>
    </location>
</feature>
<feature type="sequence conflict" description="In Ref. 2; AAA37081." evidence="8" ref="2">
    <original>H</original>
    <variation>Q</variation>
    <location>
        <position position="1651"/>
    </location>
</feature>
<feature type="sequence conflict" description="In Ref. 2; AAA37081." evidence="8" ref="2">
    <original>EL</original>
    <variation>DV</variation>
    <location>
        <begin position="1686"/>
        <end position="1687"/>
    </location>
</feature>
<feature type="sequence conflict" description="In Ref. 2; AAA37081." evidence="8" ref="2">
    <original>V</original>
    <variation>G</variation>
    <location>
        <position position="1693"/>
    </location>
</feature>
<feature type="sequence conflict" description="In Ref. 2; AAA37081." evidence="8" ref="2">
    <original>K</original>
    <variation>R</variation>
    <location>
        <position position="1844"/>
    </location>
</feature>
<feature type="sequence conflict" description="In Ref. 2; AAA37081." evidence="8" ref="2">
    <original>A</original>
    <variation>T</variation>
    <location>
        <position position="1879"/>
    </location>
</feature>
<feature type="sequence conflict" description="In Ref. 2; AAA37081." evidence="8" ref="2">
    <original>E</original>
    <variation>Q</variation>
    <location>
        <position position="1885"/>
    </location>
</feature>
<feature type="sequence conflict" description="In Ref. 2; AAA37081." evidence="8" ref="2">
    <original>E</original>
    <variation>V</variation>
    <location>
        <position position="1907"/>
    </location>
</feature>
<feature type="sequence conflict" description="In Ref. 2; AAA37081." evidence="8" ref="2">
    <original>D</original>
    <variation>N</variation>
    <location>
        <position position="1928"/>
    </location>
</feature>
<feature type="sequence conflict" description="In Ref. 2; AAA37081." evidence="8" ref="2">
    <original>QKM</original>
    <variation>KR</variation>
    <location>
        <begin position="1933"/>
        <end position="1935"/>
    </location>
</feature>
<evidence type="ECO:0000250" key="1">
    <source>
        <dbReference type="UniProtKB" id="P02563"/>
    </source>
</evidence>
<evidence type="ECO:0000250" key="2">
    <source>
        <dbReference type="UniProtKB" id="Q02566"/>
    </source>
</evidence>
<evidence type="ECO:0000255" key="3"/>
<evidence type="ECO:0000255" key="4">
    <source>
        <dbReference type="PROSITE-ProRule" id="PRU00116"/>
    </source>
</evidence>
<evidence type="ECO:0000255" key="5">
    <source>
        <dbReference type="PROSITE-ProRule" id="PRU00782"/>
    </source>
</evidence>
<evidence type="ECO:0000255" key="6">
    <source>
        <dbReference type="PROSITE-ProRule" id="PRU01190"/>
    </source>
</evidence>
<evidence type="ECO:0000256" key="7">
    <source>
        <dbReference type="SAM" id="MobiDB-lite"/>
    </source>
</evidence>
<evidence type="ECO:0000305" key="8"/>
<proteinExistence type="evidence at transcript level"/>
<keyword id="KW-0009">Actin-binding</keyword>
<keyword id="KW-0067">ATP-binding</keyword>
<keyword id="KW-0112">Calmodulin-binding</keyword>
<keyword id="KW-0175">Coiled coil</keyword>
<keyword id="KW-0963">Cytoplasm</keyword>
<keyword id="KW-0488">Methylation</keyword>
<keyword id="KW-0505">Motor protein</keyword>
<keyword id="KW-0514">Muscle protein</keyword>
<keyword id="KW-0518">Myosin</keyword>
<keyword id="KW-0547">Nucleotide-binding</keyword>
<keyword id="KW-0597">Phosphoprotein</keyword>
<keyword id="KW-1185">Reference proteome</keyword>
<keyword id="KW-0787">Thick filament</keyword>
<protein>
    <recommendedName>
        <fullName>Myosin-6</fullName>
    </recommendedName>
    <alternativeName>
        <fullName>Myosin heavy chain 6</fullName>
    </alternativeName>
    <alternativeName>
        <fullName>Myosin heavy chain, cardiac muscle alpha isoform</fullName>
        <shortName>MyHC-alpha</shortName>
    </alternativeName>
</protein>
<reference key="1">
    <citation type="journal article" date="1994" name="J. Mol. Cell. Cardiol.">
        <title>Characterization and nucleotide sequence of the cardiac alpha-myosin heavy chain gene from Syrian hamster.</title>
        <authorList>
            <person name="Wang R."/>
            <person name="Sole M.J."/>
            <person name="Cukerman E."/>
            <person name="Liew C.-C."/>
        </authorList>
    </citation>
    <scope>NUCLEOTIDE SEQUENCE [GENOMIC DNA]</scope>
    <source>
        <strain>F1B</strain>
        <tissue>Liver</tissue>
    </source>
</reference>
<reference key="2">
    <citation type="journal article" date="1986" name="Proc. Natl. Acad. Sci. U.S.A.">
        <title>Construction and characterization of the alpha form of a cardiac myosin heavy chain cDNA clone and its developmental expression in the Syrian hamster.</title>
        <authorList>
            <person name="Liew C.-C."/>
            <person name="Jandreski M.A."/>
        </authorList>
    </citation>
    <scope>NUCLEOTIDE SEQUENCE [MRNA] OF 1630-1939</scope>
</reference>
<comment type="function">
    <text>Muscle contraction.</text>
</comment>
<comment type="subunit">
    <text>Muscle myosin is a hexameric protein that consists of 2 heavy chain subunits (MHC), 2 alkali light chain subunits (MLC) and 2 regulatory light chain subunits (MLC-2).</text>
</comment>
<comment type="subcellular location">
    <subcellularLocation>
        <location>Cytoplasm</location>
        <location>Myofibril</location>
    </subcellularLocation>
    <text>Thick filaments of the myofibrils.</text>
</comment>
<comment type="domain">
    <text>The rodlike tail sequence is highly repetitive, showing cycles of a 28-residue repeat pattern composed of 4 heptapeptides, characteristic for alpha-helical coiled coils.</text>
</comment>
<comment type="domain">
    <text evidence="8">Limited proteolysis of myosin heavy chain produces 1 light meromyosin (LMM) and 1 heavy meromyosin (HMM). HMM can be further cleaved into 2 globular subfragments (S1) and 1 rod-shaped subfragment (S2).</text>
</comment>
<comment type="miscellaneous">
    <text>The cardiac alpha isoform is a 'fast' ATPase myosin, while the beta isoform is a 'slow' ATPase.</text>
</comment>
<comment type="similarity">
    <text evidence="8">Belongs to the TRAFAC class myosin-kinesin ATPase superfamily. Myosin family.</text>
</comment>
<comment type="caution">
    <text evidence="8">Represents a conventional myosin. This protein should not be confused with the unconventional myosin-6 (MYO6).</text>
</comment>
<gene>
    <name type="primary">MYH6</name>
</gene>
<name>MYH6_MESAU</name>
<dbReference type="EMBL" id="L15351">
    <property type="protein sequence ID" value="AAB59701.1"/>
    <property type="molecule type" value="Genomic_DNA"/>
</dbReference>
<dbReference type="EMBL" id="M12995">
    <property type="protein sequence ID" value="AAA37081.1"/>
    <property type="molecule type" value="mRNA"/>
</dbReference>
<dbReference type="PIR" id="I48175">
    <property type="entry name" value="I48175"/>
</dbReference>
<dbReference type="SMR" id="P13539"/>
<dbReference type="STRING" id="10036.ENSMAUP00000021186"/>
<dbReference type="Proteomes" id="UP000189706">
    <property type="component" value="Unplaced"/>
</dbReference>
<dbReference type="GO" id="GO:0030016">
    <property type="term" value="C:myofibril"/>
    <property type="evidence" value="ECO:0007669"/>
    <property type="project" value="UniProtKB-SubCell"/>
</dbReference>
<dbReference type="GO" id="GO:0032982">
    <property type="term" value="C:myosin filament"/>
    <property type="evidence" value="ECO:0007669"/>
    <property type="project" value="UniProtKB-KW"/>
</dbReference>
<dbReference type="GO" id="GO:0016460">
    <property type="term" value="C:myosin II complex"/>
    <property type="evidence" value="ECO:0007669"/>
    <property type="project" value="TreeGrafter"/>
</dbReference>
<dbReference type="GO" id="GO:0051015">
    <property type="term" value="F:actin filament binding"/>
    <property type="evidence" value="ECO:0007669"/>
    <property type="project" value="InterPro"/>
</dbReference>
<dbReference type="GO" id="GO:0005524">
    <property type="term" value="F:ATP binding"/>
    <property type="evidence" value="ECO:0007669"/>
    <property type="project" value="UniProtKB-KW"/>
</dbReference>
<dbReference type="GO" id="GO:0005516">
    <property type="term" value="F:calmodulin binding"/>
    <property type="evidence" value="ECO:0007669"/>
    <property type="project" value="UniProtKB-KW"/>
</dbReference>
<dbReference type="GO" id="GO:0000146">
    <property type="term" value="F:microfilament motor activity"/>
    <property type="evidence" value="ECO:0007669"/>
    <property type="project" value="TreeGrafter"/>
</dbReference>
<dbReference type="CDD" id="cd01377">
    <property type="entry name" value="MYSc_class_II"/>
    <property type="match status" value="1"/>
</dbReference>
<dbReference type="FunFam" id="1.10.10.820:FF:000001">
    <property type="entry name" value="Myosin heavy chain"/>
    <property type="match status" value="1"/>
</dbReference>
<dbReference type="FunFam" id="1.20.5.340:FF:000002">
    <property type="entry name" value="Myosin heavy chain"/>
    <property type="match status" value="1"/>
</dbReference>
<dbReference type="FunFam" id="1.20.5.340:FF:000003">
    <property type="entry name" value="Myosin heavy chain"/>
    <property type="match status" value="1"/>
</dbReference>
<dbReference type="FunFam" id="1.20.5.340:FF:000004">
    <property type="entry name" value="Myosin heavy chain"/>
    <property type="match status" value="1"/>
</dbReference>
<dbReference type="FunFam" id="1.20.5.340:FF:000006">
    <property type="entry name" value="Myosin heavy chain"/>
    <property type="match status" value="1"/>
</dbReference>
<dbReference type="FunFam" id="1.20.5.340:FF:000013">
    <property type="entry name" value="Myosin heavy chain"/>
    <property type="match status" value="1"/>
</dbReference>
<dbReference type="FunFam" id="1.20.5.370:FF:000001">
    <property type="entry name" value="Myosin heavy chain"/>
    <property type="match status" value="1"/>
</dbReference>
<dbReference type="FunFam" id="1.20.5.370:FF:000002">
    <property type="entry name" value="Myosin heavy chain"/>
    <property type="match status" value="1"/>
</dbReference>
<dbReference type="FunFam" id="1.20.5.370:FF:000003">
    <property type="entry name" value="Myosin heavy chain"/>
    <property type="match status" value="1"/>
</dbReference>
<dbReference type="FunFam" id="1.20.5.370:FF:000007">
    <property type="entry name" value="Myosin heavy chain"/>
    <property type="match status" value="1"/>
</dbReference>
<dbReference type="FunFam" id="1.20.5.370:FF:000008">
    <property type="entry name" value="Myosin heavy chain"/>
    <property type="match status" value="1"/>
</dbReference>
<dbReference type="FunFam" id="1.20.5.4820:FF:000001">
    <property type="entry name" value="Myosin heavy chain"/>
    <property type="match status" value="1"/>
</dbReference>
<dbReference type="FunFam" id="1.20.58.530:FF:000001">
    <property type="entry name" value="Myosin heavy chain"/>
    <property type="match status" value="1"/>
</dbReference>
<dbReference type="FunFam" id="2.30.30.360:FF:000001">
    <property type="entry name" value="Myosin heavy chain"/>
    <property type="match status" value="1"/>
</dbReference>
<dbReference type="FunFam" id="1.20.120.720:FF:000001">
    <property type="entry name" value="Myosin heavy chain, muscle"/>
    <property type="match status" value="1"/>
</dbReference>
<dbReference type="FunFam" id="3.40.850.10:FF:000115">
    <property type="entry name" value="Myosin heavy polypeptide 6"/>
    <property type="match status" value="1"/>
</dbReference>
<dbReference type="FunFam" id="3.40.850.10:FF:000101">
    <property type="entry name" value="Slow myosin heavy chain 2"/>
    <property type="match status" value="1"/>
</dbReference>
<dbReference type="Gene3D" id="1.10.10.820">
    <property type="match status" value="1"/>
</dbReference>
<dbReference type="Gene3D" id="1.20.5.340">
    <property type="match status" value="5"/>
</dbReference>
<dbReference type="Gene3D" id="1.20.5.370">
    <property type="match status" value="4"/>
</dbReference>
<dbReference type="Gene3D" id="1.20.5.4820">
    <property type="match status" value="1"/>
</dbReference>
<dbReference type="Gene3D" id="1.20.58.530">
    <property type="match status" value="1"/>
</dbReference>
<dbReference type="Gene3D" id="6.10.250.2420">
    <property type="match status" value="1"/>
</dbReference>
<dbReference type="Gene3D" id="3.40.850.10">
    <property type="entry name" value="Kinesin motor domain"/>
    <property type="match status" value="1"/>
</dbReference>
<dbReference type="Gene3D" id="2.30.30.360">
    <property type="entry name" value="Myosin S1 fragment, N-terminal"/>
    <property type="match status" value="1"/>
</dbReference>
<dbReference type="Gene3D" id="1.20.120.720">
    <property type="entry name" value="Myosin VI head, motor domain, U50 subdomain"/>
    <property type="match status" value="1"/>
</dbReference>
<dbReference type="InterPro" id="IPR036961">
    <property type="entry name" value="Kinesin_motor_dom_sf"/>
</dbReference>
<dbReference type="InterPro" id="IPR001609">
    <property type="entry name" value="Myosin_head_motor_dom-like"/>
</dbReference>
<dbReference type="InterPro" id="IPR004009">
    <property type="entry name" value="Myosin_N"/>
</dbReference>
<dbReference type="InterPro" id="IPR008989">
    <property type="entry name" value="Myosin_S1_N"/>
</dbReference>
<dbReference type="InterPro" id="IPR002928">
    <property type="entry name" value="Myosin_tail"/>
</dbReference>
<dbReference type="InterPro" id="IPR027417">
    <property type="entry name" value="P-loop_NTPase"/>
</dbReference>
<dbReference type="InterPro" id="IPR014751">
    <property type="entry name" value="XRCC4-like_C"/>
</dbReference>
<dbReference type="PANTHER" id="PTHR45615">
    <property type="entry name" value="MYOSIN HEAVY CHAIN, NON-MUSCLE"/>
    <property type="match status" value="1"/>
</dbReference>
<dbReference type="PANTHER" id="PTHR45615:SF69">
    <property type="entry name" value="MYOSIN-6"/>
    <property type="match status" value="1"/>
</dbReference>
<dbReference type="Pfam" id="PF00063">
    <property type="entry name" value="Myosin_head"/>
    <property type="match status" value="1"/>
</dbReference>
<dbReference type="Pfam" id="PF02736">
    <property type="entry name" value="Myosin_N"/>
    <property type="match status" value="1"/>
</dbReference>
<dbReference type="Pfam" id="PF01576">
    <property type="entry name" value="Myosin_tail_1"/>
    <property type="match status" value="1"/>
</dbReference>
<dbReference type="PRINTS" id="PR00193">
    <property type="entry name" value="MYOSINHEAVY"/>
</dbReference>
<dbReference type="SMART" id="SM00242">
    <property type="entry name" value="MYSc"/>
    <property type="match status" value="1"/>
</dbReference>
<dbReference type="SUPFAM" id="SSF90257">
    <property type="entry name" value="Myosin rod fragments"/>
    <property type="match status" value="4"/>
</dbReference>
<dbReference type="SUPFAM" id="SSF52540">
    <property type="entry name" value="P-loop containing nucleoside triphosphate hydrolases"/>
    <property type="match status" value="1"/>
</dbReference>
<dbReference type="SUPFAM" id="SSF57997">
    <property type="entry name" value="Tropomyosin"/>
    <property type="match status" value="1"/>
</dbReference>
<dbReference type="PROSITE" id="PS50096">
    <property type="entry name" value="IQ"/>
    <property type="match status" value="1"/>
</dbReference>
<dbReference type="PROSITE" id="PS51456">
    <property type="entry name" value="MYOSIN_MOTOR"/>
    <property type="match status" value="1"/>
</dbReference>
<dbReference type="PROSITE" id="PS51844">
    <property type="entry name" value="SH3_LIKE"/>
    <property type="match status" value="1"/>
</dbReference>
<sequence length="1939" mass="223627">MTDSQMADFGAAAEYLRKSEKERLEAQTRPFDIRTECFVPDDKEEFVKAKIVSREGGKVTAETENGKTVTVKEDQVMQQNPPKFDKIEDMAMLTFLHEPAVLYNLKERYAAWMIYTYSGLFCVTVNPYKWLPVYNAEVVAAYRGKKRSEAPAHIFSISDNAYQYMLTDRENQSILITGESGAGKTVNTKRVIQYFASIAAIGDRSKKDNPNANKGTLEDQIIQANPALEAFGNAKTVRNDNSSRFGKFIRIHFGATGKLASADIETYLLEKSRVIFQLKAERNYHIFYQILSNKKPELLDMLLVTNNPYDYAFVSQGEVSVASIDDSEELLATDSAFDVLGFTAEEKAGVYKLTGAIMHYGNMKFKQKQREEQAEPDGTEDADKSAYLMGLNSADLLKGLCHPRVKVGNEYVTKGQSVQQVYYSIGALGKSVYEKMFNWMVTRINATLETKQPRQYFIGVLDIAGFEIFDFNSFEQLCINFTNEKLQQFFNHHMFVLEQEEYKKEGIEWEFIDFGMDLQACIDLIEKPMGIMSILEEECMFPKATDMTFKAKLYDNHLGKSNNFQKPRNVKGKQEAHFSLVHYAGTVDYNILGWLEKNKDPLNETVVGLYQKSSLKLMATLFSTYASADAGDSGKGKGGKKKGSSFQTVSALHRENLNKLMTNLRTTHPHFVRCIIPNERKAPGVMDNPLVMHQLRCNGVLEGIRICRKGFPNRILYGDFRQRYRILNPAAIPEGQFIDSRKGAEKLLSSLDIDHNQYKFGHTKVFFKAGLLGLLEEMRDERLSRIITRIQAQARGQLMRIEFKKMVERRDALLVIQWNIRAFMGVKNWPWMKLYFKIKPLLKSAETEKEMANMKEEFGRVKESLEKSEARRKELEEKMVSLLQEKNDLQFQVQAEQDNLNDAEERCDQLIKNKIQLEAKVKEMTERLEDEEEMNAELTSKKRKLEDECSELKKDIDDLELTLAKVEKEKHATENKVKNLTEEMAGLDEIIAKLTKEKKALQEAHQQALDDLQAEEDKVNTLTKSKVKLEQQVDDLEGSLEQEKKVRMDLERAKRKLEGDLNVTQESIMDLENDKLQLEEKLKKKEFDISQQNSKIEDEQALALQLQKKLKENQARIEELEEELEAERTARAKVEKLRSDLTRELEEISERLEEAGGATSVQIEMNKKREAEFQKMRRDLEEATLQHEATAAALRKKHADSVAELGEQIDNLQRVKQKLEKEKSEFKLELDDVTSNMEQIIKAKANLEKVSRTLEDQANEYRVKLEESQRSLNDFTTQRAKLQTENGELARQLEEKEALISQLTRGKLSYTQQMEDLKRQLEEEGKAKNALAHALQSARHDCDLLREQYEEEMEAKAELQRVLSKANSEVAQWRTKYETDAIQRTEELEEAKKKLAQRLQDAEEAVEAVNAKCSSLEKTKHRLQNEIEDLMVDVERSNAAAAALDKKQRNFDKILAEWKQKYEESQSELESSQKEARSLSTELFKLKNAYEESLEHLETFKRENKNLQEEISDLTEQLGEGGKNVHELEKVRKQLEVEKMELQSALEEAEASLEHEEGKILRAQLEFNQIKAEIERKLAEKDEEMEQAKRNHLRVVDSLQTSLDAETRSRNEALRVKKKMEGDLNEMEIQLSQANRIASEAQKHLKNAQAHLKDTQLQLDDALHANDDLKENIAIVERRNTLLQAELEELRAVVEQTERSRKLAEQELIETSERVQLLHSQNTSLINQKKKMEADLTQLQTEVEEAVQECRNAEEKAKKAITDAAMMAEELKKEQDTSAHLERMKKNMEQTIKDLQHRLDEAEQIALKGGKKQLQKLEARVRELENELEAEQKRNAESVKGMRKSERRIKELTYQTEEDKKNLVRLQDLVDKLQLKVKAYKRQAEEAEEQANTNLSKFRKVQHELDEAEERADIAESQVNKLRAKSRDIGAKQKMHDEE</sequence>
<organism>
    <name type="scientific">Mesocricetus auratus</name>
    <name type="common">Golden hamster</name>
    <dbReference type="NCBI Taxonomy" id="10036"/>
    <lineage>
        <taxon>Eukaryota</taxon>
        <taxon>Metazoa</taxon>
        <taxon>Chordata</taxon>
        <taxon>Craniata</taxon>
        <taxon>Vertebrata</taxon>
        <taxon>Euteleostomi</taxon>
        <taxon>Mammalia</taxon>
        <taxon>Eutheria</taxon>
        <taxon>Euarchontoglires</taxon>
        <taxon>Glires</taxon>
        <taxon>Rodentia</taxon>
        <taxon>Myomorpha</taxon>
        <taxon>Muroidea</taxon>
        <taxon>Cricetidae</taxon>
        <taxon>Cricetinae</taxon>
        <taxon>Mesocricetus</taxon>
    </lineage>
</organism>